<reference evidence="4" key="1">
    <citation type="journal article" date="2009" name="BMC Evol. Biol.">
        <title>A proteomic approach for studying insect phylogeny: CAPA peptides of ancient insect taxa (Dictyoptera, Blattoptera) as a test case.</title>
        <authorList>
            <person name="Roth S."/>
            <person name="Fromm B."/>
            <person name="Gaede G."/>
            <person name="Predel R."/>
        </authorList>
    </citation>
    <scope>PROTEIN SEQUENCE</scope>
    <scope>AMIDATION AT VAL-11</scope>
    <source>
        <tissue evidence="2">Abdominal perisympathetic organs</tissue>
    </source>
</reference>
<keyword id="KW-0027">Amidation</keyword>
<keyword id="KW-0903">Direct protein sequencing</keyword>
<keyword id="KW-0527">Neuropeptide</keyword>
<keyword id="KW-0964">Secreted</keyword>
<organism>
    <name type="scientific">Blattella germanica</name>
    <name type="common">German cockroach</name>
    <name type="synonym">Blatta germanica</name>
    <dbReference type="NCBI Taxonomy" id="6973"/>
    <lineage>
        <taxon>Eukaryota</taxon>
        <taxon>Metazoa</taxon>
        <taxon>Ecdysozoa</taxon>
        <taxon>Arthropoda</taxon>
        <taxon>Hexapoda</taxon>
        <taxon>Insecta</taxon>
        <taxon>Pterygota</taxon>
        <taxon>Neoptera</taxon>
        <taxon>Polyneoptera</taxon>
        <taxon>Dictyoptera</taxon>
        <taxon>Blattodea</taxon>
        <taxon>Blaberoidea</taxon>
        <taxon>Blattellidae</taxon>
        <taxon>Blattella</taxon>
    </lineage>
</organism>
<dbReference type="GO" id="GO:0005576">
    <property type="term" value="C:extracellular region"/>
    <property type="evidence" value="ECO:0007669"/>
    <property type="project" value="UniProtKB-SubCell"/>
</dbReference>
<dbReference type="GO" id="GO:0007218">
    <property type="term" value="P:neuropeptide signaling pathway"/>
    <property type="evidence" value="ECO:0007669"/>
    <property type="project" value="UniProtKB-KW"/>
</dbReference>
<dbReference type="InterPro" id="IPR013231">
    <property type="entry name" value="Periviscerokinin"/>
</dbReference>
<dbReference type="Pfam" id="PF08259">
    <property type="entry name" value="Periviscerokin"/>
    <property type="match status" value="1"/>
</dbReference>
<accession>P85552</accession>
<protein>
    <recommendedName>
        <fullName evidence="3">Periviscerokinin-2</fullName>
        <shortName evidence="3">BlaGe-PVK-2</shortName>
    </recommendedName>
</protein>
<evidence type="ECO:0000255" key="1"/>
<evidence type="ECO:0000269" key="2">
    <source>
    </source>
</evidence>
<evidence type="ECO:0000303" key="3">
    <source>
    </source>
</evidence>
<evidence type="ECO:0000305" key="4"/>
<sequence length="11" mass="1103">GSSGLISMPRV</sequence>
<comment type="function">
    <text evidence="4">Mediates visceral muscle contractile activity (myotropic activity).</text>
</comment>
<comment type="subcellular location">
    <subcellularLocation>
        <location evidence="4">Secreted</location>
    </subcellularLocation>
</comment>
<comment type="similarity">
    <text evidence="1">Belongs to the periviscerokinin family.</text>
</comment>
<feature type="peptide" id="PRO_0000378776" description="Periviscerokinin-2" evidence="2">
    <location>
        <begin position="1"/>
        <end position="11"/>
    </location>
</feature>
<feature type="modified residue" description="Valine amide" evidence="2">
    <location>
        <position position="11"/>
    </location>
</feature>
<proteinExistence type="evidence at protein level"/>
<name>PVK2_BLAGE</name>